<proteinExistence type="inferred from homology"/>
<dbReference type="EC" id="3.1.26.4" evidence="1"/>
<dbReference type="EMBL" id="CP000437">
    <property type="protein sequence ID" value="ABI82767.1"/>
    <property type="molecule type" value="Genomic_DNA"/>
</dbReference>
<dbReference type="RefSeq" id="WP_003015471.1">
    <property type="nucleotide sequence ID" value="NC_017463.1"/>
</dbReference>
<dbReference type="SMR" id="Q0BMB7"/>
<dbReference type="GeneID" id="75265176"/>
<dbReference type="KEGG" id="fth:FTH_0843"/>
<dbReference type="GO" id="GO:0005737">
    <property type="term" value="C:cytoplasm"/>
    <property type="evidence" value="ECO:0007669"/>
    <property type="project" value="UniProtKB-SubCell"/>
</dbReference>
<dbReference type="GO" id="GO:0000287">
    <property type="term" value="F:magnesium ion binding"/>
    <property type="evidence" value="ECO:0007669"/>
    <property type="project" value="UniProtKB-UniRule"/>
</dbReference>
<dbReference type="GO" id="GO:0003676">
    <property type="term" value="F:nucleic acid binding"/>
    <property type="evidence" value="ECO:0007669"/>
    <property type="project" value="InterPro"/>
</dbReference>
<dbReference type="GO" id="GO:0004523">
    <property type="term" value="F:RNA-DNA hybrid ribonuclease activity"/>
    <property type="evidence" value="ECO:0007669"/>
    <property type="project" value="UniProtKB-UniRule"/>
</dbReference>
<dbReference type="GO" id="GO:0043137">
    <property type="term" value="P:DNA replication, removal of RNA primer"/>
    <property type="evidence" value="ECO:0007669"/>
    <property type="project" value="TreeGrafter"/>
</dbReference>
<dbReference type="CDD" id="cd09278">
    <property type="entry name" value="RNase_HI_prokaryote_like"/>
    <property type="match status" value="1"/>
</dbReference>
<dbReference type="FunFam" id="3.30.420.10:FF:000089">
    <property type="entry name" value="Ribonuclease H"/>
    <property type="match status" value="1"/>
</dbReference>
<dbReference type="Gene3D" id="3.30.420.10">
    <property type="entry name" value="Ribonuclease H-like superfamily/Ribonuclease H"/>
    <property type="match status" value="1"/>
</dbReference>
<dbReference type="HAMAP" id="MF_00042">
    <property type="entry name" value="RNase_H"/>
    <property type="match status" value="1"/>
</dbReference>
<dbReference type="InterPro" id="IPR050092">
    <property type="entry name" value="RNase_H"/>
</dbReference>
<dbReference type="InterPro" id="IPR012337">
    <property type="entry name" value="RNaseH-like_sf"/>
</dbReference>
<dbReference type="InterPro" id="IPR002156">
    <property type="entry name" value="RNaseH_domain"/>
</dbReference>
<dbReference type="InterPro" id="IPR036397">
    <property type="entry name" value="RNaseH_sf"/>
</dbReference>
<dbReference type="InterPro" id="IPR022892">
    <property type="entry name" value="RNaseHI"/>
</dbReference>
<dbReference type="NCBIfam" id="NF001236">
    <property type="entry name" value="PRK00203.1"/>
    <property type="match status" value="1"/>
</dbReference>
<dbReference type="PANTHER" id="PTHR10642">
    <property type="entry name" value="RIBONUCLEASE H1"/>
    <property type="match status" value="1"/>
</dbReference>
<dbReference type="PANTHER" id="PTHR10642:SF26">
    <property type="entry name" value="RIBONUCLEASE H1"/>
    <property type="match status" value="1"/>
</dbReference>
<dbReference type="Pfam" id="PF00075">
    <property type="entry name" value="RNase_H"/>
    <property type="match status" value="1"/>
</dbReference>
<dbReference type="SUPFAM" id="SSF53098">
    <property type="entry name" value="Ribonuclease H-like"/>
    <property type="match status" value="1"/>
</dbReference>
<dbReference type="PROSITE" id="PS50879">
    <property type="entry name" value="RNASE_H_1"/>
    <property type="match status" value="1"/>
</dbReference>
<protein>
    <recommendedName>
        <fullName evidence="1">Ribonuclease H</fullName>
        <shortName evidence="1">RNase H</shortName>
        <ecNumber evidence="1">3.1.26.4</ecNumber>
    </recommendedName>
</protein>
<name>RNH_FRATO</name>
<evidence type="ECO:0000255" key="1">
    <source>
        <dbReference type="HAMAP-Rule" id="MF_00042"/>
    </source>
</evidence>
<evidence type="ECO:0000255" key="2">
    <source>
        <dbReference type="PROSITE-ProRule" id="PRU00408"/>
    </source>
</evidence>
<organism>
    <name type="scientific">Francisella tularensis subsp. holarctica (strain OSU18)</name>
    <dbReference type="NCBI Taxonomy" id="393011"/>
    <lineage>
        <taxon>Bacteria</taxon>
        <taxon>Pseudomonadati</taxon>
        <taxon>Pseudomonadota</taxon>
        <taxon>Gammaproteobacteria</taxon>
        <taxon>Thiotrichales</taxon>
        <taxon>Francisellaceae</taxon>
        <taxon>Francisella</taxon>
    </lineage>
</organism>
<gene>
    <name evidence="1" type="primary">rnhA</name>
    <name type="ordered locus">FTH_0843</name>
</gene>
<accession>Q0BMB7</accession>
<reference key="1">
    <citation type="journal article" date="2006" name="J. Bacteriol.">
        <title>Chromosome rearrangement and diversification of Francisella tularensis revealed by the type B (OSU18) genome sequence.</title>
        <authorList>
            <person name="Petrosino J.F."/>
            <person name="Xiang Q."/>
            <person name="Karpathy S.E."/>
            <person name="Jiang H."/>
            <person name="Yerrapragada S."/>
            <person name="Liu Y."/>
            <person name="Gioia J."/>
            <person name="Hemphill L."/>
            <person name="Gonzalez A."/>
            <person name="Raghavan T.M."/>
            <person name="Uzman A."/>
            <person name="Fox G.E."/>
            <person name="Highlander S."/>
            <person name="Reichard M."/>
            <person name="Morton R.J."/>
            <person name="Clinkenbeard K.D."/>
            <person name="Weinstock G.M."/>
        </authorList>
    </citation>
    <scope>NUCLEOTIDE SEQUENCE [LARGE SCALE GENOMIC DNA]</scope>
    <source>
        <strain>OSU18</strain>
    </source>
</reference>
<sequence>MEIFKKKNRVIAYTDGACKGNPGIGGWGAILSYNGVDKEIYGSEKDTTNNRMELMAAIKTLQALKRKCDITIYTDSKYLQNGINEWLANWKANGWKTAAKKEVKNKDLWQELDSLTNKHNVTWGWVKGHSGNAGNEKADELANKAIAELIGK</sequence>
<keyword id="KW-0963">Cytoplasm</keyword>
<keyword id="KW-0255">Endonuclease</keyword>
<keyword id="KW-0378">Hydrolase</keyword>
<keyword id="KW-0460">Magnesium</keyword>
<keyword id="KW-0479">Metal-binding</keyword>
<keyword id="KW-0540">Nuclease</keyword>
<comment type="function">
    <text evidence="1">Endonuclease that specifically degrades the RNA of RNA-DNA hybrids.</text>
</comment>
<comment type="catalytic activity">
    <reaction evidence="1">
        <text>Endonucleolytic cleavage to 5'-phosphomonoester.</text>
        <dbReference type="EC" id="3.1.26.4"/>
    </reaction>
</comment>
<comment type="cofactor">
    <cofactor evidence="1">
        <name>Mg(2+)</name>
        <dbReference type="ChEBI" id="CHEBI:18420"/>
    </cofactor>
    <text evidence="1">Binds 1 Mg(2+) ion per subunit. May bind a second metal ion at a regulatory site, or after substrate binding.</text>
</comment>
<comment type="subunit">
    <text evidence="1">Monomer.</text>
</comment>
<comment type="subcellular location">
    <subcellularLocation>
        <location evidence="1">Cytoplasm</location>
    </subcellularLocation>
</comment>
<comment type="similarity">
    <text evidence="1">Belongs to the RNase H family.</text>
</comment>
<feature type="chain" id="PRO_0000332600" description="Ribonuclease H">
    <location>
        <begin position="1"/>
        <end position="152"/>
    </location>
</feature>
<feature type="domain" description="RNase H type-1" evidence="2">
    <location>
        <begin position="6"/>
        <end position="147"/>
    </location>
</feature>
<feature type="binding site" evidence="1">
    <location>
        <position position="15"/>
    </location>
    <ligand>
        <name>Mg(2+)</name>
        <dbReference type="ChEBI" id="CHEBI:18420"/>
        <label>1</label>
    </ligand>
</feature>
<feature type="binding site" evidence="1">
    <location>
        <position position="15"/>
    </location>
    <ligand>
        <name>Mg(2+)</name>
        <dbReference type="ChEBI" id="CHEBI:18420"/>
        <label>2</label>
    </ligand>
</feature>
<feature type="binding site" evidence="1">
    <location>
        <position position="53"/>
    </location>
    <ligand>
        <name>Mg(2+)</name>
        <dbReference type="ChEBI" id="CHEBI:18420"/>
        <label>1</label>
    </ligand>
</feature>
<feature type="binding site" evidence="1">
    <location>
        <position position="75"/>
    </location>
    <ligand>
        <name>Mg(2+)</name>
        <dbReference type="ChEBI" id="CHEBI:18420"/>
        <label>1</label>
    </ligand>
</feature>
<feature type="binding site" evidence="1">
    <location>
        <position position="139"/>
    </location>
    <ligand>
        <name>Mg(2+)</name>
        <dbReference type="ChEBI" id="CHEBI:18420"/>
        <label>2</label>
    </ligand>
</feature>